<dbReference type="EMBL" id="AE004439">
    <property type="protein sequence ID" value="AAK03285.1"/>
    <property type="molecule type" value="Genomic_DNA"/>
</dbReference>
<dbReference type="RefSeq" id="WP_010907068.1">
    <property type="nucleotide sequence ID" value="NC_002663.1"/>
</dbReference>
<dbReference type="SMR" id="Q9CLM2"/>
<dbReference type="STRING" id="272843.PM1201"/>
<dbReference type="EnsemblBacteria" id="AAK03285">
    <property type="protein sequence ID" value="AAK03285"/>
    <property type="gene ID" value="PM1201"/>
</dbReference>
<dbReference type="KEGG" id="pmu:PM1201"/>
<dbReference type="PATRIC" id="fig|272843.6.peg.1212"/>
<dbReference type="HOGENOM" id="CLU_095345_0_0_6"/>
<dbReference type="OrthoDB" id="2964117at2"/>
<dbReference type="Proteomes" id="UP000000809">
    <property type="component" value="Chromosome"/>
</dbReference>
<organism>
    <name type="scientific">Pasteurella multocida (strain Pm70)</name>
    <dbReference type="NCBI Taxonomy" id="272843"/>
    <lineage>
        <taxon>Bacteria</taxon>
        <taxon>Pseudomonadati</taxon>
        <taxon>Pseudomonadota</taxon>
        <taxon>Gammaproteobacteria</taxon>
        <taxon>Pasteurellales</taxon>
        <taxon>Pasteurellaceae</taxon>
        <taxon>Pasteurella</taxon>
    </lineage>
</organism>
<protein>
    <recommendedName>
        <fullName>Uncharacterized protein PM1201</fullName>
    </recommendedName>
</protein>
<reference key="1">
    <citation type="journal article" date="2001" name="Proc. Natl. Acad. Sci. U.S.A.">
        <title>Complete genomic sequence of Pasteurella multocida Pm70.</title>
        <authorList>
            <person name="May B.J."/>
            <person name="Zhang Q."/>
            <person name="Li L.L."/>
            <person name="Paustian M.L."/>
            <person name="Whittam T.S."/>
            <person name="Kapur V."/>
        </authorList>
    </citation>
    <scope>NUCLEOTIDE SEQUENCE [LARGE SCALE GENOMIC DNA]</scope>
    <source>
        <strain>Pm70</strain>
    </source>
</reference>
<evidence type="ECO:0000255" key="1"/>
<gene>
    <name type="ordered locus">PM1201</name>
</gene>
<feature type="chain" id="PRO_0000216319" description="Uncharacterized protein PM1201">
    <location>
        <begin position="1"/>
        <end position="220"/>
    </location>
</feature>
<feature type="coiled-coil region" evidence="1">
    <location>
        <begin position="165"/>
        <end position="202"/>
    </location>
</feature>
<sequence length="220" mass="26197">MSKKDGYLEFFSYFNISEEKFINFAKESIIFIKQEKAKQEWDILKSKILNEKENVYVRNFGRNGQGGHLYQEVYKQLFLANIIVDPSNNNYPTKLLEKSVGLVKNKNLYNYQVSHIFGLTKNPYAFCAPWNIVFIPKILDPFTGHESKGEITEKITAMYRRLMWDKYEDLISDYNKIMEKYREVIKSEIEKYKALSKRKNDIYSRFIESVNIEFNVIEKI</sequence>
<keyword id="KW-0175">Coiled coil</keyword>
<keyword id="KW-1185">Reference proteome</keyword>
<name>Y1201_PASMU</name>
<accession>Q9CLM2</accession>
<proteinExistence type="predicted"/>